<sequence>MSKLTNVVIFIVFFLGMMAKETQGQHICHQILLNNNCDGATCTSLCDKQLQGTGQCYKTVDKRFICLCNYLCRT</sequence>
<proteinExistence type="inferred from homology"/>
<dbReference type="EMBL" id="AL137898">
    <property type="status" value="NOT_ANNOTATED_CDS"/>
    <property type="molecule type" value="Genomic_DNA"/>
</dbReference>
<dbReference type="EMBL" id="CP002686">
    <property type="protein sequence ID" value="AEE80165.1"/>
    <property type="molecule type" value="Genomic_DNA"/>
</dbReference>
<dbReference type="RefSeq" id="NP_001030909.1">
    <property type="nucleotide sequence ID" value="NM_001035832.2"/>
</dbReference>
<dbReference type="SMR" id="P82723"/>
<dbReference type="PaxDb" id="3702-AT3G61172.1"/>
<dbReference type="EnsemblPlants" id="AT3G61172.1">
    <property type="protein sequence ID" value="AT3G61172.1"/>
    <property type="gene ID" value="AT3G61172"/>
</dbReference>
<dbReference type="GeneID" id="3769755"/>
<dbReference type="Gramene" id="AT3G61172.1">
    <property type="protein sequence ID" value="AT3G61172.1"/>
    <property type="gene ID" value="AT3G61172"/>
</dbReference>
<dbReference type="KEGG" id="ath:AT3G61172"/>
<dbReference type="Araport" id="AT3G61172"/>
<dbReference type="TAIR" id="AT3G61172">
    <property type="gene designation" value="LCR8"/>
</dbReference>
<dbReference type="HOGENOM" id="CLU_182511_2_0_1"/>
<dbReference type="InParanoid" id="P82723"/>
<dbReference type="OMA" id="NRFNCIC"/>
<dbReference type="OrthoDB" id="1022881at2759"/>
<dbReference type="PhylomeDB" id="P82723"/>
<dbReference type="PRO" id="PR:P82723"/>
<dbReference type="Proteomes" id="UP000006548">
    <property type="component" value="Chromosome 3"/>
</dbReference>
<dbReference type="ExpressionAtlas" id="P82723">
    <property type="expression patterns" value="baseline"/>
</dbReference>
<dbReference type="GO" id="GO:0005576">
    <property type="term" value="C:extracellular region"/>
    <property type="evidence" value="ECO:0007669"/>
    <property type="project" value="UniProtKB-SubCell"/>
</dbReference>
<dbReference type="GO" id="GO:0050832">
    <property type="term" value="P:defense response to fungus"/>
    <property type="evidence" value="ECO:0007669"/>
    <property type="project" value="UniProtKB-KW"/>
</dbReference>
<dbReference type="GO" id="GO:0031640">
    <property type="term" value="P:killing of cells of another organism"/>
    <property type="evidence" value="ECO:0007669"/>
    <property type="project" value="UniProtKB-KW"/>
</dbReference>
<dbReference type="InterPro" id="IPR010851">
    <property type="entry name" value="DEFL"/>
</dbReference>
<dbReference type="PANTHER" id="PTHR33830:SF25">
    <property type="entry name" value="DEFENSIN-LIKE PROTEIN 128-RELATED"/>
    <property type="match status" value="1"/>
</dbReference>
<dbReference type="PANTHER" id="PTHR33830">
    <property type="entry name" value="DEFENSIN-LIKE PROTEIN 184-RELATED"/>
    <property type="match status" value="1"/>
</dbReference>
<dbReference type="Pfam" id="PF07333">
    <property type="entry name" value="SLR1-BP"/>
    <property type="match status" value="1"/>
</dbReference>
<organism evidence="3">
    <name type="scientific">Arabidopsis thaliana</name>
    <name type="common">Mouse-ear cress</name>
    <dbReference type="NCBI Taxonomy" id="3702"/>
    <lineage>
        <taxon>Eukaryota</taxon>
        <taxon>Viridiplantae</taxon>
        <taxon>Streptophyta</taxon>
        <taxon>Embryophyta</taxon>
        <taxon>Tracheophyta</taxon>
        <taxon>Spermatophyta</taxon>
        <taxon>Magnoliopsida</taxon>
        <taxon>eudicotyledons</taxon>
        <taxon>Gunneridae</taxon>
        <taxon>Pentapetalae</taxon>
        <taxon>rosids</taxon>
        <taxon>malvids</taxon>
        <taxon>Brassicales</taxon>
        <taxon>Brassicaceae</taxon>
        <taxon>Camelineae</taxon>
        <taxon>Arabidopsis</taxon>
    </lineage>
</organism>
<accession>P82723</accession>
<evidence type="ECO:0000250" key="1"/>
<evidence type="ECO:0000255" key="2"/>
<evidence type="ECO:0000305" key="3"/>
<reference evidence="3" key="1">
    <citation type="journal article" date="2000" name="Nature">
        <title>Sequence and analysis of chromosome 3 of the plant Arabidopsis thaliana.</title>
        <authorList>
            <person name="Salanoubat M."/>
            <person name="Lemcke K."/>
            <person name="Rieger M."/>
            <person name="Ansorge W."/>
            <person name="Unseld M."/>
            <person name="Fartmann B."/>
            <person name="Valle G."/>
            <person name="Bloecker H."/>
            <person name="Perez-Alonso M."/>
            <person name="Obermaier B."/>
            <person name="Delseny M."/>
            <person name="Boutry M."/>
            <person name="Grivell L.A."/>
            <person name="Mache R."/>
            <person name="Puigdomenech P."/>
            <person name="De Simone V."/>
            <person name="Choisne N."/>
            <person name="Artiguenave F."/>
            <person name="Robert C."/>
            <person name="Brottier P."/>
            <person name="Wincker P."/>
            <person name="Cattolico L."/>
            <person name="Weissenbach J."/>
            <person name="Saurin W."/>
            <person name="Quetier F."/>
            <person name="Schaefer M."/>
            <person name="Mueller-Auer S."/>
            <person name="Gabel C."/>
            <person name="Fuchs M."/>
            <person name="Benes V."/>
            <person name="Wurmbach E."/>
            <person name="Drzonek H."/>
            <person name="Erfle H."/>
            <person name="Jordan N."/>
            <person name="Bangert S."/>
            <person name="Wiedelmann R."/>
            <person name="Kranz H."/>
            <person name="Voss H."/>
            <person name="Holland R."/>
            <person name="Brandt P."/>
            <person name="Nyakatura G."/>
            <person name="Vezzi A."/>
            <person name="D'Angelo M."/>
            <person name="Pallavicini A."/>
            <person name="Toppo S."/>
            <person name="Simionati B."/>
            <person name="Conrad A."/>
            <person name="Hornischer K."/>
            <person name="Kauer G."/>
            <person name="Loehnert T.-H."/>
            <person name="Nordsiek G."/>
            <person name="Reichelt J."/>
            <person name="Scharfe M."/>
            <person name="Schoen O."/>
            <person name="Bargues M."/>
            <person name="Terol J."/>
            <person name="Climent J."/>
            <person name="Navarro P."/>
            <person name="Collado C."/>
            <person name="Perez-Perez A."/>
            <person name="Ottenwaelder B."/>
            <person name="Duchemin D."/>
            <person name="Cooke R."/>
            <person name="Laudie M."/>
            <person name="Berger-Llauro C."/>
            <person name="Purnelle B."/>
            <person name="Masuy D."/>
            <person name="de Haan M."/>
            <person name="Maarse A.C."/>
            <person name="Alcaraz J.-P."/>
            <person name="Cottet A."/>
            <person name="Casacuberta E."/>
            <person name="Monfort A."/>
            <person name="Argiriou A."/>
            <person name="Flores M."/>
            <person name="Liguori R."/>
            <person name="Vitale D."/>
            <person name="Mannhaupt G."/>
            <person name="Haase D."/>
            <person name="Schoof H."/>
            <person name="Rudd S."/>
            <person name="Zaccaria P."/>
            <person name="Mewes H.-W."/>
            <person name="Mayer K.F.X."/>
            <person name="Kaul S."/>
            <person name="Town C.D."/>
            <person name="Koo H.L."/>
            <person name="Tallon L.J."/>
            <person name="Jenkins J."/>
            <person name="Rooney T."/>
            <person name="Rizzo M."/>
            <person name="Walts A."/>
            <person name="Utterback T."/>
            <person name="Fujii C.Y."/>
            <person name="Shea T.P."/>
            <person name="Creasy T.H."/>
            <person name="Haas B."/>
            <person name="Maiti R."/>
            <person name="Wu D."/>
            <person name="Peterson J."/>
            <person name="Van Aken S."/>
            <person name="Pai G."/>
            <person name="Militscher J."/>
            <person name="Sellers P."/>
            <person name="Gill J.E."/>
            <person name="Feldblyum T.V."/>
            <person name="Preuss D."/>
            <person name="Lin X."/>
            <person name="Nierman W.C."/>
            <person name="Salzberg S.L."/>
            <person name="White O."/>
            <person name="Venter J.C."/>
            <person name="Fraser C.M."/>
            <person name="Kaneko T."/>
            <person name="Nakamura Y."/>
            <person name="Sato S."/>
            <person name="Kato T."/>
            <person name="Asamizu E."/>
            <person name="Sasamoto S."/>
            <person name="Kimura T."/>
            <person name="Idesawa K."/>
            <person name="Kawashima K."/>
            <person name="Kishida Y."/>
            <person name="Kiyokawa C."/>
            <person name="Kohara M."/>
            <person name="Matsumoto M."/>
            <person name="Matsuno A."/>
            <person name="Muraki A."/>
            <person name="Nakayama S."/>
            <person name="Nakazaki N."/>
            <person name="Shinpo S."/>
            <person name="Takeuchi C."/>
            <person name="Wada T."/>
            <person name="Watanabe A."/>
            <person name="Yamada M."/>
            <person name="Yasuda M."/>
            <person name="Tabata S."/>
        </authorList>
    </citation>
    <scope>NUCLEOTIDE SEQUENCE [LARGE SCALE GENOMIC DNA]</scope>
    <source>
        <strain>cv. Columbia</strain>
    </source>
</reference>
<reference key="2">
    <citation type="journal article" date="2017" name="Plant J.">
        <title>Araport11: a complete reannotation of the Arabidopsis thaliana reference genome.</title>
        <authorList>
            <person name="Cheng C.Y."/>
            <person name="Krishnakumar V."/>
            <person name="Chan A.P."/>
            <person name="Thibaud-Nissen F."/>
            <person name="Schobel S."/>
            <person name="Town C.D."/>
        </authorList>
    </citation>
    <scope>GENOME REANNOTATION</scope>
    <source>
        <strain>cv. Columbia</strain>
    </source>
</reference>
<reference evidence="3" key="3">
    <citation type="journal article" date="2001" name="Plant Mol. Biol.">
        <title>Two large Arabidopsis thaliana gene families are homologous to the Brassica gene superfamily that encodes pollen coat proteins and the male component of the self-incompatibility response.</title>
        <authorList>
            <person name="Vanoosthuyse V."/>
            <person name="Miege C."/>
            <person name="Dumas C."/>
            <person name="Cock J.M."/>
        </authorList>
    </citation>
    <scope>IDENTIFICATION</scope>
</reference>
<reference key="4">
    <citation type="journal article" date="2005" name="Plant Physiol.">
        <title>Genome organization of more than 300 defensin-like genes in Arabidopsis.</title>
        <authorList>
            <person name="Silverstein K.A.T."/>
            <person name="Graham M.A."/>
            <person name="Paape T.D."/>
            <person name="VandenBosch K.A."/>
        </authorList>
    </citation>
    <scope>GENE FAMILY</scope>
</reference>
<gene>
    <name type="primary">LCR8</name>
    <name type="ordered locus">At3g61172</name>
    <name type="ORF">T20K12</name>
</gene>
<protein>
    <recommendedName>
        <fullName>Putative defensin-like protein 128</fullName>
    </recommendedName>
    <alternativeName>
        <fullName>Putative low-molecular-weight cysteine-rich protein 8</fullName>
        <shortName>Protein LCR8</shortName>
    </alternativeName>
</protein>
<feature type="signal peptide" evidence="2">
    <location>
        <begin position="1"/>
        <end position="24"/>
    </location>
</feature>
<feature type="chain" id="PRO_0000017250" description="Putative defensin-like protein 128">
    <location>
        <begin position="25"/>
        <end position="74"/>
    </location>
</feature>
<feature type="disulfide bond" evidence="1">
    <location>
        <begin position="28"/>
        <end position="72"/>
    </location>
</feature>
<feature type="disulfide bond" evidence="1">
    <location>
        <begin position="37"/>
        <end position="56"/>
    </location>
</feature>
<feature type="disulfide bond" evidence="1">
    <location>
        <begin position="42"/>
        <end position="66"/>
    </location>
</feature>
<feature type="disulfide bond" evidence="1">
    <location>
        <begin position="46"/>
        <end position="68"/>
    </location>
</feature>
<name>DF128_ARATH</name>
<comment type="subcellular location">
    <subcellularLocation>
        <location evidence="1">Secreted</location>
    </subcellularLocation>
</comment>
<comment type="similarity">
    <text evidence="3">Belongs to the DEFL family.</text>
</comment>
<keyword id="KW-0929">Antimicrobial</keyword>
<keyword id="KW-1015">Disulfide bond</keyword>
<keyword id="KW-0295">Fungicide</keyword>
<keyword id="KW-0611">Plant defense</keyword>
<keyword id="KW-1185">Reference proteome</keyword>
<keyword id="KW-0964">Secreted</keyword>
<keyword id="KW-0732">Signal</keyword>